<evidence type="ECO:0000255" key="1">
    <source>
        <dbReference type="HAMAP-Rule" id="MF_01852"/>
    </source>
</evidence>
<comment type="function">
    <text evidence="1">Required for the formation of a threonylcarbamoyl group on adenosine at position 37 (t(6)A37) in tRNAs that read codons beginning with adenine. Catalyzes the conversion of L-threonine, HCO(3)(-)/CO(2) and ATP to give threonylcarbamoyl-AMP (TC-AMP) as the acyladenylate intermediate, with the release of diphosphate.</text>
</comment>
<comment type="catalytic activity">
    <reaction evidence="1">
        <text>L-threonine + hydrogencarbonate + ATP = L-threonylcarbamoyladenylate + diphosphate + H2O</text>
        <dbReference type="Rhea" id="RHEA:36407"/>
        <dbReference type="ChEBI" id="CHEBI:15377"/>
        <dbReference type="ChEBI" id="CHEBI:17544"/>
        <dbReference type="ChEBI" id="CHEBI:30616"/>
        <dbReference type="ChEBI" id="CHEBI:33019"/>
        <dbReference type="ChEBI" id="CHEBI:57926"/>
        <dbReference type="ChEBI" id="CHEBI:73682"/>
        <dbReference type="EC" id="2.7.7.87"/>
    </reaction>
</comment>
<comment type="subcellular location">
    <subcellularLocation>
        <location evidence="1">Cytoplasm</location>
    </subcellularLocation>
</comment>
<comment type="similarity">
    <text evidence="1">Belongs to the SUA5 family. TsaC subfamily.</text>
</comment>
<protein>
    <recommendedName>
        <fullName evidence="1">Threonylcarbamoyl-AMP synthase</fullName>
        <shortName evidence="1">TC-AMP synthase</shortName>
        <ecNumber evidence="1">2.7.7.87</ecNumber>
    </recommendedName>
    <alternativeName>
        <fullName evidence="1">L-threonylcarbamoyladenylate synthase</fullName>
    </alternativeName>
    <alternativeName>
        <fullName evidence="1">t(6)A37 threonylcarbamoyladenosine biosynthesis protein TsaC</fullName>
    </alternativeName>
    <alternativeName>
        <fullName evidence="1">tRNA threonylcarbamoyladenosine biosynthesis protein TsaC</fullName>
    </alternativeName>
</protein>
<reference key="1">
    <citation type="journal article" date="2002" name="Nat. Biotechnol.">
        <title>Genome sequence of the dissimilatory metal ion-reducing bacterium Shewanella oneidensis.</title>
        <authorList>
            <person name="Heidelberg J.F."/>
            <person name="Paulsen I.T."/>
            <person name="Nelson K.E."/>
            <person name="Gaidos E.J."/>
            <person name="Nelson W.C."/>
            <person name="Read T.D."/>
            <person name="Eisen J.A."/>
            <person name="Seshadri R."/>
            <person name="Ward N.L."/>
            <person name="Methe B.A."/>
            <person name="Clayton R.A."/>
            <person name="Meyer T."/>
            <person name="Tsapin A."/>
            <person name="Scott J."/>
            <person name="Beanan M.J."/>
            <person name="Brinkac L.M."/>
            <person name="Daugherty S.C."/>
            <person name="DeBoy R.T."/>
            <person name="Dodson R.J."/>
            <person name="Durkin A.S."/>
            <person name="Haft D.H."/>
            <person name="Kolonay J.F."/>
            <person name="Madupu R."/>
            <person name="Peterson J.D."/>
            <person name="Umayam L.A."/>
            <person name="White O."/>
            <person name="Wolf A.M."/>
            <person name="Vamathevan J.J."/>
            <person name="Weidman J.F."/>
            <person name="Impraim M."/>
            <person name="Lee K."/>
            <person name="Berry K.J."/>
            <person name="Lee C."/>
            <person name="Mueller J."/>
            <person name="Khouri H.M."/>
            <person name="Gill J."/>
            <person name="Utterback T.R."/>
            <person name="McDonald L.A."/>
            <person name="Feldblyum T.V."/>
            <person name="Smith H.O."/>
            <person name="Venter J.C."/>
            <person name="Nealson K.H."/>
            <person name="Fraser C.M."/>
        </authorList>
    </citation>
    <scope>NUCLEOTIDE SEQUENCE [LARGE SCALE GENOMIC DNA]</scope>
    <source>
        <strain>ATCC 700550 / JCM 31522 / CIP 106686 / LMG 19005 / NCIMB 14063 / MR-1</strain>
    </source>
</reference>
<accession>Q8EKQ3</accession>
<dbReference type="EC" id="2.7.7.87" evidence="1"/>
<dbReference type="EMBL" id="AE014299">
    <property type="protein sequence ID" value="AAN53124.1"/>
    <property type="molecule type" value="Genomic_DNA"/>
</dbReference>
<dbReference type="RefSeq" id="NP_715679.1">
    <property type="nucleotide sequence ID" value="NC_004347.2"/>
</dbReference>
<dbReference type="RefSeq" id="WP_011070453.1">
    <property type="nucleotide sequence ID" value="NC_004347.2"/>
</dbReference>
<dbReference type="SMR" id="Q8EKQ3"/>
<dbReference type="STRING" id="211586.SO_0037"/>
<dbReference type="PaxDb" id="211586-SO_0037"/>
<dbReference type="KEGG" id="son:SO_0037"/>
<dbReference type="PATRIC" id="fig|211586.12.peg.37"/>
<dbReference type="eggNOG" id="COG0009">
    <property type="taxonomic scope" value="Bacteria"/>
</dbReference>
<dbReference type="HOGENOM" id="CLU_031397_6_0_6"/>
<dbReference type="OrthoDB" id="9814580at2"/>
<dbReference type="PhylomeDB" id="Q8EKQ3"/>
<dbReference type="BioCyc" id="SONE211586:G1GMP-37-MONOMER"/>
<dbReference type="Proteomes" id="UP000008186">
    <property type="component" value="Chromosome"/>
</dbReference>
<dbReference type="GO" id="GO:0005737">
    <property type="term" value="C:cytoplasm"/>
    <property type="evidence" value="ECO:0000318"/>
    <property type="project" value="GO_Central"/>
</dbReference>
<dbReference type="GO" id="GO:0005524">
    <property type="term" value="F:ATP binding"/>
    <property type="evidence" value="ECO:0007669"/>
    <property type="project" value="UniProtKB-UniRule"/>
</dbReference>
<dbReference type="GO" id="GO:0003725">
    <property type="term" value="F:double-stranded RNA binding"/>
    <property type="evidence" value="ECO:0007669"/>
    <property type="project" value="InterPro"/>
</dbReference>
<dbReference type="GO" id="GO:0061710">
    <property type="term" value="F:L-threonylcarbamoyladenylate synthase"/>
    <property type="evidence" value="ECO:0007669"/>
    <property type="project" value="UniProtKB-EC"/>
</dbReference>
<dbReference type="GO" id="GO:0016779">
    <property type="term" value="F:nucleotidyltransferase activity"/>
    <property type="evidence" value="ECO:0000318"/>
    <property type="project" value="GO_Central"/>
</dbReference>
<dbReference type="GO" id="GO:0000049">
    <property type="term" value="F:tRNA binding"/>
    <property type="evidence" value="ECO:0000318"/>
    <property type="project" value="GO_Central"/>
</dbReference>
<dbReference type="GO" id="GO:0006450">
    <property type="term" value="P:regulation of translational fidelity"/>
    <property type="evidence" value="ECO:0000318"/>
    <property type="project" value="GO_Central"/>
</dbReference>
<dbReference type="GO" id="GO:0002949">
    <property type="term" value="P:tRNA threonylcarbamoyladenosine modification"/>
    <property type="evidence" value="ECO:0007669"/>
    <property type="project" value="UniProtKB-UniRule"/>
</dbReference>
<dbReference type="FunFam" id="3.90.870.10:FF:000017">
    <property type="entry name" value="Threonylcarbamoyl-AMP synthase"/>
    <property type="match status" value="1"/>
</dbReference>
<dbReference type="Gene3D" id="3.90.870.10">
    <property type="entry name" value="DHBP synthase"/>
    <property type="match status" value="1"/>
</dbReference>
<dbReference type="HAMAP" id="MF_01852">
    <property type="entry name" value="TsaC"/>
    <property type="match status" value="1"/>
</dbReference>
<dbReference type="InterPro" id="IPR017945">
    <property type="entry name" value="DHBP_synth_RibB-like_a/b_dom"/>
</dbReference>
<dbReference type="InterPro" id="IPR006070">
    <property type="entry name" value="Sua5-like_dom"/>
</dbReference>
<dbReference type="InterPro" id="IPR023535">
    <property type="entry name" value="TC-AMP_synthase"/>
</dbReference>
<dbReference type="InterPro" id="IPR050156">
    <property type="entry name" value="TC-AMP_synthase_SUA5"/>
</dbReference>
<dbReference type="NCBIfam" id="TIGR00057">
    <property type="entry name" value="L-threonylcarbamoyladenylate synthase"/>
    <property type="match status" value="1"/>
</dbReference>
<dbReference type="PANTHER" id="PTHR17490">
    <property type="entry name" value="SUA5"/>
    <property type="match status" value="1"/>
</dbReference>
<dbReference type="PANTHER" id="PTHR17490:SF18">
    <property type="entry name" value="THREONYLCARBAMOYL-AMP SYNTHASE"/>
    <property type="match status" value="1"/>
</dbReference>
<dbReference type="Pfam" id="PF01300">
    <property type="entry name" value="Sua5_yciO_yrdC"/>
    <property type="match status" value="1"/>
</dbReference>
<dbReference type="SUPFAM" id="SSF55821">
    <property type="entry name" value="YrdC/RibB"/>
    <property type="match status" value="1"/>
</dbReference>
<dbReference type="PROSITE" id="PS51163">
    <property type="entry name" value="YRDC"/>
    <property type="match status" value="1"/>
</dbReference>
<gene>
    <name evidence="1" type="primary">tsaC</name>
    <name type="synonym">rimN</name>
    <name type="ordered locus">SO_0037</name>
</gene>
<keyword id="KW-0067">ATP-binding</keyword>
<keyword id="KW-0963">Cytoplasm</keyword>
<keyword id="KW-0547">Nucleotide-binding</keyword>
<keyword id="KW-0548">Nucleotidyltransferase</keyword>
<keyword id="KW-1185">Reference proteome</keyword>
<keyword id="KW-0808">Transferase</keyword>
<keyword id="KW-0819">tRNA processing</keyword>
<sequence>MLQLHPSDIKDVVLNGGVIAYPTEAVYGLGCDPDNDTAIQKLLAVKQRPWQKGLILVASEFSQLLAYVDESQLTDEQLELAFSKWPGPFTFVMPIKPHVSRYLCGEFDSIAVRVSAHEGVRALCQALGKPLVSTSANLAGEDPALSGDEILNVFEGKIDALVLGQLGEQRQPSTIIDARSGKILRNGQ</sequence>
<organism>
    <name type="scientific">Shewanella oneidensis (strain ATCC 700550 / JCM 31522 / CIP 106686 / LMG 19005 / NCIMB 14063 / MR-1)</name>
    <dbReference type="NCBI Taxonomy" id="211586"/>
    <lineage>
        <taxon>Bacteria</taxon>
        <taxon>Pseudomonadati</taxon>
        <taxon>Pseudomonadota</taxon>
        <taxon>Gammaproteobacteria</taxon>
        <taxon>Alteromonadales</taxon>
        <taxon>Shewanellaceae</taxon>
        <taxon>Shewanella</taxon>
    </lineage>
</organism>
<name>TSAC_SHEON</name>
<feature type="chain" id="PRO_0000352982" description="Threonylcarbamoyl-AMP synthase">
    <location>
        <begin position="1"/>
        <end position="188"/>
    </location>
</feature>
<feature type="domain" description="YrdC-like" evidence="1">
    <location>
        <begin position="3"/>
        <end position="188"/>
    </location>
</feature>
<proteinExistence type="inferred from homology"/>